<gene>
    <name type="ordered locus">YLR149C-A</name>
</gene>
<proteinExistence type="uncertain"/>
<feature type="chain" id="PRO_0000309046" description="Putative uncharacterized protein YLR149C-A">
    <location>
        <begin position="1"/>
        <end position="28"/>
    </location>
</feature>
<sequence length="28" mass="3325">MCMLSWFISTSPLKEYCGGKRNLQRNNF</sequence>
<accession>P0C5P8</accession>
<comment type="caution">
    <text evidence="1">Product of a dubious gene prediction unlikely to encode a functional protein. Because of that it is not part of the S.cerevisiae S288c complete/reference proteome set.</text>
</comment>
<protein>
    <recommendedName>
        <fullName>Putative uncharacterized protein YLR149C-A</fullName>
    </recommendedName>
</protein>
<name>YL49A_YEAST</name>
<organism>
    <name type="scientific">Saccharomyces cerevisiae (strain ATCC 204508 / S288c)</name>
    <name type="common">Baker's yeast</name>
    <dbReference type="NCBI Taxonomy" id="559292"/>
    <lineage>
        <taxon>Eukaryota</taxon>
        <taxon>Fungi</taxon>
        <taxon>Dikarya</taxon>
        <taxon>Ascomycota</taxon>
        <taxon>Saccharomycotina</taxon>
        <taxon>Saccharomycetes</taxon>
        <taxon>Saccharomycetales</taxon>
        <taxon>Saccharomycetaceae</taxon>
        <taxon>Saccharomyces</taxon>
    </lineage>
</organism>
<evidence type="ECO:0000305" key="1">
    <source>
    </source>
</evidence>
<reference key="1">
    <citation type="journal article" date="1997" name="Nature">
        <title>The nucleotide sequence of Saccharomyces cerevisiae chromosome XII.</title>
        <authorList>
            <person name="Johnston M."/>
            <person name="Hillier L.W."/>
            <person name="Riles L."/>
            <person name="Albermann K."/>
            <person name="Andre B."/>
            <person name="Ansorge W."/>
            <person name="Benes V."/>
            <person name="Brueckner M."/>
            <person name="Delius H."/>
            <person name="Dubois E."/>
            <person name="Duesterhoeft A."/>
            <person name="Entian K.-D."/>
            <person name="Floeth M."/>
            <person name="Goffeau A."/>
            <person name="Hebling U."/>
            <person name="Heumann K."/>
            <person name="Heuss-Neitzel D."/>
            <person name="Hilbert H."/>
            <person name="Hilger F."/>
            <person name="Kleine K."/>
            <person name="Koetter P."/>
            <person name="Louis E.J."/>
            <person name="Messenguy F."/>
            <person name="Mewes H.-W."/>
            <person name="Miosga T."/>
            <person name="Moestl D."/>
            <person name="Mueller-Auer S."/>
            <person name="Nentwich U."/>
            <person name="Obermaier B."/>
            <person name="Piravandi E."/>
            <person name="Pohl T.M."/>
            <person name="Portetelle D."/>
            <person name="Purnelle B."/>
            <person name="Rechmann S."/>
            <person name="Rieger M."/>
            <person name="Rinke M."/>
            <person name="Rose M."/>
            <person name="Scharfe M."/>
            <person name="Scherens B."/>
            <person name="Scholler P."/>
            <person name="Schwager C."/>
            <person name="Schwarz S."/>
            <person name="Underwood A.P."/>
            <person name="Urrestarazu L.A."/>
            <person name="Vandenbol M."/>
            <person name="Verhasselt P."/>
            <person name="Vierendeels F."/>
            <person name="Voet M."/>
            <person name="Volckaert G."/>
            <person name="Voss H."/>
            <person name="Wambutt R."/>
            <person name="Wedler E."/>
            <person name="Wedler H."/>
            <person name="Zimmermann F.K."/>
            <person name="Zollner A."/>
            <person name="Hani J."/>
            <person name="Hoheisel J.D."/>
        </authorList>
    </citation>
    <scope>NUCLEOTIDE SEQUENCE [LARGE SCALE GENOMIC DNA]</scope>
    <source>
        <strain>ATCC 204508 / S288c</strain>
    </source>
</reference>
<reference key="2">
    <citation type="journal article" date="2014" name="G3 (Bethesda)">
        <title>The reference genome sequence of Saccharomyces cerevisiae: Then and now.</title>
        <authorList>
            <person name="Engel S.R."/>
            <person name="Dietrich F.S."/>
            <person name="Fisk D.G."/>
            <person name="Binkley G."/>
            <person name="Balakrishnan R."/>
            <person name="Costanzo M.C."/>
            <person name="Dwight S.S."/>
            <person name="Hitz B.C."/>
            <person name="Karra K."/>
            <person name="Nash R.S."/>
            <person name="Weng S."/>
            <person name="Wong E.D."/>
            <person name="Lloyd P."/>
            <person name="Skrzypek M.S."/>
            <person name="Miyasato S.R."/>
            <person name="Simison M."/>
            <person name="Cherry J.M."/>
        </authorList>
    </citation>
    <scope>GENOME REANNOTATION</scope>
    <source>
        <strain>ATCC 204508 / S288c</strain>
    </source>
</reference>
<reference key="3">
    <citation type="journal article" date="2000" name="FEBS Lett.">
        <title>Genomic exploration of the hemiascomycetous yeasts: 4. The genome of Saccharomyces cerevisiae revisited.</title>
        <authorList>
            <person name="Blandin G."/>
            <person name="Durrens P."/>
            <person name="Tekaia F."/>
            <person name="Aigle M."/>
            <person name="Bolotin-Fukuhara M."/>
            <person name="Bon E."/>
            <person name="Casaregola S."/>
            <person name="de Montigny J."/>
            <person name="Gaillardin C."/>
            <person name="Lepingle A."/>
            <person name="Llorente B."/>
            <person name="Malpertuy A."/>
            <person name="Neuveglise C."/>
            <person name="Ozier-Kalogeropoulos O."/>
            <person name="Perrin A."/>
            <person name="Potier S."/>
            <person name="Souciet J.-L."/>
            <person name="Talla E."/>
            <person name="Toffano-Nioche C."/>
            <person name="Wesolowski-Louvel M."/>
            <person name="Marck C."/>
            <person name="Dujon B."/>
        </authorList>
    </citation>
    <scope>GENOME REANNOTATION</scope>
</reference>
<dbReference type="EMBL" id="U53879">
    <property type="status" value="NOT_ANNOTATED_CDS"/>
    <property type="molecule type" value="Genomic_DNA"/>
</dbReference>
<dbReference type="EMBL" id="Z73321">
    <property type="status" value="NOT_ANNOTATED_CDS"/>
    <property type="molecule type" value="Genomic_DNA"/>
</dbReference>
<dbReference type="EMBL" id="Z73322">
    <property type="status" value="NOT_ANNOTATED_CDS"/>
    <property type="molecule type" value="Genomic_DNA"/>
</dbReference>
<dbReference type="STRING" id="4932.YLR149C-A"/>
<dbReference type="PaxDb" id="4932-YLR149C-A"/>
<dbReference type="EnsemblFungi" id="YLR149C-A_mRNA">
    <property type="protein sequence ID" value="YLR149C-A"/>
    <property type="gene ID" value="YLR149C-A"/>
</dbReference>
<dbReference type="AGR" id="SGD:S000007619"/>
<dbReference type="SGD" id="S000007619">
    <property type="gene designation" value="YLR149C-A"/>
</dbReference>
<dbReference type="HOGENOM" id="CLU_3413183_0_0_1"/>